<proteinExistence type="inferred from homology"/>
<gene>
    <name type="ordered locus">BG0025</name>
</gene>
<feature type="chain" id="PRO_0000175771" description="Probable transcriptional regulatory protein BG0025">
    <location>
        <begin position="1"/>
        <end position="243"/>
    </location>
</feature>
<reference key="1">
    <citation type="journal article" date="2004" name="Nucleic Acids Res.">
        <title>Comparative analysis of the Borrelia garinii genome.</title>
        <authorList>
            <person name="Gloeckner G."/>
            <person name="Lehmann R."/>
            <person name="Romualdi A."/>
            <person name="Pradella S."/>
            <person name="Schulte-Spechtel U."/>
            <person name="Schilhabel M."/>
            <person name="Wilske B."/>
            <person name="Suehnel J."/>
            <person name="Platzer M."/>
        </authorList>
    </citation>
    <scope>NUCLEOTIDE SEQUENCE [LARGE SCALE GENOMIC DNA]</scope>
    <source>
        <strain>ATCC BAA-2496 / DSM 23469 / PBi</strain>
    </source>
</reference>
<protein>
    <recommendedName>
        <fullName evidence="1">Probable transcriptional regulatory protein BG0025</fullName>
    </recommendedName>
</protein>
<organism>
    <name type="scientific">Borrelia garinii subsp. bavariensis (strain ATCC BAA-2496 / DSM 23469 / PBi)</name>
    <name type="common">Borreliella bavariensis</name>
    <dbReference type="NCBI Taxonomy" id="290434"/>
    <lineage>
        <taxon>Bacteria</taxon>
        <taxon>Pseudomonadati</taxon>
        <taxon>Spirochaetota</taxon>
        <taxon>Spirochaetia</taxon>
        <taxon>Spirochaetales</taxon>
        <taxon>Borreliaceae</taxon>
        <taxon>Borreliella</taxon>
    </lineage>
</organism>
<keyword id="KW-0963">Cytoplasm</keyword>
<keyword id="KW-0238">DNA-binding</keyword>
<keyword id="KW-0804">Transcription</keyword>
<keyword id="KW-0805">Transcription regulation</keyword>
<dbReference type="EMBL" id="CP000013">
    <property type="protein sequence ID" value="AAU06884.1"/>
    <property type="molecule type" value="Genomic_DNA"/>
</dbReference>
<dbReference type="RefSeq" id="WP_011193379.1">
    <property type="nucleotide sequence ID" value="NZ_CP028872.1"/>
</dbReference>
<dbReference type="SMR" id="Q662Y7"/>
<dbReference type="GeneID" id="45160824"/>
<dbReference type="KEGG" id="bga:BG0025"/>
<dbReference type="eggNOG" id="COG0217">
    <property type="taxonomic scope" value="Bacteria"/>
</dbReference>
<dbReference type="HOGENOM" id="CLU_062974_2_2_12"/>
<dbReference type="OrthoDB" id="9781053at2"/>
<dbReference type="Proteomes" id="UP000002276">
    <property type="component" value="Chromosome"/>
</dbReference>
<dbReference type="GO" id="GO:0005829">
    <property type="term" value="C:cytosol"/>
    <property type="evidence" value="ECO:0007669"/>
    <property type="project" value="TreeGrafter"/>
</dbReference>
<dbReference type="GO" id="GO:0003677">
    <property type="term" value="F:DNA binding"/>
    <property type="evidence" value="ECO:0007669"/>
    <property type="project" value="UniProtKB-UniRule"/>
</dbReference>
<dbReference type="GO" id="GO:0006355">
    <property type="term" value="P:regulation of DNA-templated transcription"/>
    <property type="evidence" value="ECO:0007669"/>
    <property type="project" value="UniProtKB-UniRule"/>
</dbReference>
<dbReference type="FunFam" id="1.10.10.200:FF:000002">
    <property type="entry name" value="Probable transcriptional regulatory protein CLM62_37755"/>
    <property type="match status" value="1"/>
</dbReference>
<dbReference type="Gene3D" id="1.10.10.200">
    <property type="match status" value="1"/>
</dbReference>
<dbReference type="Gene3D" id="3.30.70.980">
    <property type="match status" value="2"/>
</dbReference>
<dbReference type="HAMAP" id="MF_00693">
    <property type="entry name" value="Transcrip_reg_TACO1"/>
    <property type="match status" value="1"/>
</dbReference>
<dbReference type="InterPro" id="IPR017856">
    <property type="entry name" value="Integrase-like_N"/>
</dbReference>
<dbReference type="InterPro" id="IPR048300">
    <property type="entry name" value="TACO1_YebC-like_2nd/3rd_dom"/>
</dbReference>
<dbReference type="InterPro" id="IPR049083">
    <property type="entry name" value="TACO1_YebC_N"/>
</dbReference>
<dbReference type="InterPro" id="IPR002876">
    <property type="entry name" value="Transcrip_reg_TACO1-like"/>
</dbReference>
<dbReference type="InterPro" id="IPR026564">
    <property type="entry name" value="Transcrip_reg_TACO1-like_dom3"/>
</dbReference>
<dbReference type="InterPro" id="IPR029072">
    <property type="entry name" value="YebC-like"/>
</dbReference>
<dbReference type="NCBIfam" id="NF001030">
    <property type="entry name" value="PRK00110.1"/>
    <property type="match status" value="1"/>
</dbReference>
<dbReference type="NCBIfam" id="NF009044">
    <property type="entry name" value="PRK12378.1"/>
    <property type="match status" value="1"/>
</dbReference>
<dbReference type="NCBIfam" id="TIGR01033">
    <property type="entry name" value="YebC/PmpR family DNA-binding transcriptional regulator"/>
    <property type="match status" value="1"/>
</dbReference>
<dbReference type="PANTHER" id="PTHR12532:SF6">
    <property type="entry name" value="TRANSCRIPTIONAL REGULATORY PROTEIN YEBC-RELATED"/>
    <property type="match status" value="1"/>
</dbReference>
<dbReference type="PANTHER" id="PTHR12532">
    <property type="entry name" value="TRANSLATIONAL ACTIVATOR OF CYTOCHROME C OXIDASE 1"/>
    <property type="match status" value="1"/>
</dbReference>
<dbReference type="Pfam" id="PF20772">
    <property type="entry name" value="TACO1_YebC_N"/>
    <property type="match status" value="1"/>
</dbReference>
<dbReference type="Pfam" id="PF01709">
    <property type="entry name" value="Transcrip_reg"/>
    <property type="match status" value="1"/>
</dbReference>
<dbReference type="SUPFAM" id="SSF75625">
    <property type="entry name" value="YebC-like"/>
    <property type="match status" value="1"/>
</dbReference>
<comment type="subcellular location">
    <subcellularLocation>
        <location evidence="1">Cytoplasm</location>
    </subcellularLocation>
</comment>
<comment type="similarity">
    <text evidence="1">Belongs to the TACO1 family.</text>
</comment>
<accession>Q662Y7</accession>
<name>Y025_BORGP</name>
<sequence length="243" mass="27066">MSGHSKWSTIKRKKGALDAKRNKIFTKLIREITIAAKIGGGDVESNPRLRVAVNKAKVANMPKDNIEKAIKKGIGGNEGVEYFEITYEAYAPYGVALMIKCLTDNKNRTSSDVKSVLAKGGGSLGTPGSVSYMFYRKGLIVYNLEKYLEDEIMEFALEAGVEDILVSNNEAEVITSPDDFDKVLSFLKTKFKEEMAEVALIPENKISLNKEQAEKIILLIEKLEDFDDVQEVIHNLEIPEELS</sequence>
<evidence type="ECO:0000255" key="1">
    <source>
        <dbReference type="HAMAP-Rule" id="MF_00693"/>
    </source>
</evidence>